<keyword id="KW-0025">Alternative splicing</keyword>
<keyword id="KW-0472">Membrane</keyword>
<keyword id="KW-1185">Reference proteome</keyword>
<keyword id="KW-0812">Transmembrane</keyword>
<keyword id="KW-1133">Transmembrane helix</keyword>
<organism>
    <name type="scientific">Caenorhabditis elegans</name>
    <dbReference type="NCBI Taxonomy" id="6239"/>
    <lineage>
        <taxon>Eukaryota</taxon>
        <taxon>Metazoa</taxon>
        <taxon>Ecdysozoa</taxon>
        <taxon>Nematoda</taxon>
        <taxon>Chromadorea</taxon>
        <taxon>Rhabditida</taxon>
        <taxon>Rhabditina</taxon>
        <taxon>Rhabditomorpha</taxon>
        <taxon>Rhabditoidea</taxon>
        <taxon>Rhabditidae</taxon>
        <taxon>Peloderinae</taxon>
        <taxon>Caenorhabditis</taxon>
    </lineage>
</organism>
<proteinExistence type="predicted"/>
<name>YO41_CAEEL</name>
<dbReference type="EMBL" id="Z29121">
    <property type="protein sequence ID" value="CCA65690.1"/>
    <property type="molecule type" value="Genomic_DNA"/>
</dbReference>
<dbReference type="EMBL" id="Z29121">
    <property type="protein sequence ID" value="CCA65691.1"/>
    <property type="molecule type" value="Genomic_DNA"/>
</dbReference>
<dbReference type="PIR" id="S41011">
    <property type="entry name" value="S41011"/>
</dbReference>
<dbReference type="RefSeq" id="NP_001255042.2">
    <property type="nucleotide sequence ID" value="NM_001268113.2"/>
</dbReference>
<dbReference type="RefSeq" id="NP_001255043.1">
    <molecule id="P34679-2"/>
    <property type="nucleotide sequence ID" value="NM_001268114.1"/>
</dbReference>
<dbReference type="SMR" id="P34679"/>
<dbReference type="FunCoup" id="P34679">
    <property type="interactions" value="4"/>
</dbReference>
<dbReference type="PaxDb" id="6239-ZK757.1a"/>
<dbReference type="EnsemblMetazoa" id="ZK757.1a.1">
    <property type="protein sequence ID" value="ZK757.1a.1"/>
    <property type="gene ID" value="WBGene00014073"/>
</dbReference>
<dbReference type="EnsemblMetazoa" id="ZK757.1b.1">
    <molecule id="P34679-2"/>
    <property type="protein sequence ID" value="ZK757.1b.1"/>
    <property type="gene ID" value="WBGene00014073"/>
</dbReference>
<dbReference type="GeneID" id="353421"/>
<dbReference type="KEGG" id="cel:CELE_ZK757.1"/>
<dbReference type="UCSC" id="ZK757.1">
    <molecule id="P34679-1"/>
    <property type="organism name" value="c. elegans"/>
</dbReference>
<dbReference type="AGR" id="WB:WBGene00014073"/>
<dbReference type="CTD" id="353421"/>
<dbReference type="WormBase" id="ZK757.1a">
    <property type="protein sequence ID" value="CE50282"/>
    <property type="gene ID" value="WBGene00014073"/>
</dbReference>
<dbReference type="WormBase" id="ZK757.1b">
    <molecule id="P34679-2"/>
    <property type="protein sequence ID" value="CE46028"/>
    <property type="gene ID" value="WBGene00014073"/>
</dbReference>
<dbReference type="eggNOG" id="ENOG502TGCY">
    <property type="taxonomic scope" value="Eukaryota"/>
</dbReference>
<dbReference type="GeneTree" id="ENSGT00970000195977"/>
<dbReference type="HOGENOM" id="CLU_872182_0_0_1"/>
<dbReference type="InParanoid" id="P34679"/>
<dbReference type="OrthoDB" id="5810980at2759"/>
<dbReference type="PhylomeDB" id="P34679"/>
<dbReference type="PRO" id="PR:P34679"/>
<dbReference type="Proteomes" id="UP000001940">
    <property type="component" value="Chromosome III"/>
</dbReference>
<dbReference type="Bgee" id="WBGene00014073">
    <property type="expression patterns" value="Expressed in larva and 3 other cell types or tissues"/>
</dbReference>
<dbReference type="GO" id="GO:0016020">
    <property type="term" value="C:membrane"/>
    <property type="evidence" value="ECO:0007669"/>
    <property type="project" value="UniProtKB-SubCell"/>
</dbReference>
<dbReference type="InterPro" id="IPR010601">
    <property type="entry name" value="DUF1182"/>
</dbReference>
<dbReference type="PANTHER" id="PTHR38614">
    <property type="entry name" value="PROTEIN CBG09954"/>
    <property type="match status" value="1"/>
</dbReference>
<dbReference type="PANTHER" id="PTHR38614:SF4">
    <property type="entry name" value="PROTEIN CBG09954"/>
    <property type="match status" value="1"/>
</dbReference>
<dbReference type="Pfam" id="PF06681">
    <property type="entry name" value="DUF1182"/>
    <property type="match status" value="1"/>
</dbReference>
<dbReference type="SUPFAM" id="SSF81321">
    <property type="entry name" value="Family A G protein-coupled receptor-like"/>
    <property type="match status" value="1"/>
</dbReference>
<accession>P34679</accession>
<accession>F5GU74</accession>
<accession>F5GU75</accession>
<comment type="subcellular location">
    <subcellularLocation>
        <location evidence="2">Membrane</location>
        <topology evidence="2">Multi-pass membrane protein</topology>
    </subcellularLocation>
</comment>
<comment type="alternative products">
    <event type="alternative splicing"/>
    <isoform>
        <id>P34679-1</id>
        <name>a</name>
        <sequence type="displayed"/>
    </isoform>
    <isoform>
        <id>P34679-2</id>
        <name>b</name>
        <sequence type="described" ref="VSP_044156"/>
    </isoform>
</comment>
<sequence length="320" mass="36621">MIYNNISLNTITTTPLTYRDRITFEFSVHGTCVVFNLFLCIFFICRPHLLRTFKPTIFFVTLGTFVLSLPLFFLQFYLVVFLWSLVEPRYTIAVCTLVKCITSSTTSCAQVLPLAVAIYRYFIVVRNKKMPSWFVVVVHSIISFIFFVIAILNFPLGEFETNDQCAVLRFSKAMEAVRISLTLGLNLFAVFINVAIYTFVKKYDKRNVDVHRRRVQLTYSMLLQSMIPILVSIPLLVGSFDFYFGYTLPSGFTSRWYATTFLSPLLTPISSMLSLRTIRHELLSIILSSFLFTGTRKISNLVTKTSKTNVAPHSSDYSSA</sequence>
<evidence type="ECO:0000255" key="1"/>
<evidence type="ECO:0000305" key="2"/>
<reference key="1">
    <citation type="journal article" date="1994" name="Nature">
        <title>2.2 Mb of contiguous nucleotide sequence from chromosome III of C. elegans.</title>
        <authorList>
            <person name="Wilson R."/>
            <person name="Ainscough R."/>
            <person name="Anderson K."/>
            <person name="Baynes C."/>
            <person name="Berks M."/>
            <person name="Bonfield J."/>
            <person name="Burton J."/>
            <person name="Connell M."/>
            <person name="Copsey T."/>
            <person name="Cooper J."/>
            <person name="Coulson A."/>
            <person name="Craxton M."/>
            <person name="Dear S."/>
            <person name="Du Z."/>
            <person name="Durbin R."/>
            <person name="Favello A."/>
            <person name="Fraser A."/>
            <person name="Fulton L."/>
            <person name="Gardner A."/>
            <person name="Green P."/>
            <person name="Hawkins T."/>
            <person name="Hillier L."/>
            <person name="Jier M."/>
            <person name="Johnston L."/>
            <person name="Jones M."/>
            <person name="Kershaw J."/>
            <person name="Kirsten J."/>
            <person name="Laisster N."/>
            <person name="Latreille P."/>
            <person name="Lightning J."/>
            <person name="Lloyd C."/>
            <person name="Mortimore B."/>
            <person name="O'Callaghan M."/>
            <person name="Parsons J."/>
            <person name="Percy C."/>
            <person name="Rifken L."/>
            <person name="Roopra A."/>
            <person name="Saunders D."/>
            <person name="Shownkeen R."/>
            <person name="Sims M."/>
            <person name="Smaldon N."/>
            <person name="Smith A."/>
            <person name="Smith M."/>
            <person name="Sonnhammer E."/>
            <person name="Staden R."/>
            <person name="Sulston J."/>
            <person name="Thierry-Mieg J."/>
            <person name="Thomas K."/>
            <person name="Vaudin M."/>
            <person name="Vaughan K."/>
            <person name="Waterston R."/>
            <person name="Watson A."/>
            <person name="Weinstock L."/>
            <person name="Wilkinson-Sproat J."/>
            <person name="Wohldman P."/>
        </authorList>
    </citation>
    <scope>NUCLEOTIDE SEQUENCE [LARGE SCALE GENOMIC DNA]</scope>
    <scope>ALTERNATIVE SPLICING</scope>
    <source>
        <strain>Bristol N2</strain>
    </source>
</reference>
<reference key="2">
    <citation type="journal article" date="1998" name="Science">
        <title>Genome sequence of the nematode C. elegans: a platform for investigating biology.</title>
        <authorList>
            <consortium name="The C. elegans sequencing consortium"/>
        </authorList>
    </citation>
    <scope>NUCLEOTIDE SEQUENCE [LARGE SCALE GENOMIC DNA]</scope>
    <scope>ALTERNATIVE SPLICING</scope>
    <source>
        <strain>Bristol N2</strain>
    </source>
</reference>
<feature type="chain" id="PRO_0000065546" description="Uncharacterized protein ZK757.1">
    <location>
        <begin position="1"/>
        <end position="320"/>
    </location>
</feature>
<feature type="transmembrane region" description="Helical" evidence="1">
    <location>
        <begin position="24"/>
        <end position="44"/>
    </location>
</feature>
<feature type="transmembrane region" description="Helical" evidence="1">
    <location>
        <begin position="65"/>
        <end position="85"/>
    </location>
</feature>
<feature type="transmembrane region" description="Helical" evidence="1">
    <location>
        <begin position="105"/>
        <end position="125"/>
    </location>
</feature>
<feature type="transmembrane region" description="Helical" evidence="1">
    <location>
        <begin position="132"/>
        <end position="152"/>
    </location>
</feature>
<feature type="transmembrane region" description="Helical" evidence="1">
    <location>
        <begin position="179"/>
        <end position="199"/>
    </location>
</feature>
<feature type="transmembrane region" description="Helical" evidence="1">
    <location>
        <begin position="226"/>
        <end position="246"/>
    </location>
</feature>
<feature type="transmembrane region" description="Helical" evidence="1">
    <location>
        <begin position="253"/>
        <end position="275"/>
    </location>
</feature>
<feature type="splice variant" id="VSP_044156" description="In isoform b." evidence="2">
    <location>
        <begin position="1"/>
        <end position="220"/>
    </location>
</feature>
<protein>
    <recommendedName>
        <fullName>Uncharacterized protein ZK757.1</fullName>
    </recommendedName>
</protein>
<gene>
    <name type="ORF">ZK757.1</name>
</gene>